<name>COX3_SHEEP</name>
<comment type="function">
    <text evidence="2">Component of the cytochrome c oxidase, the last enzyme in the mitochondrial electron transport chain which drives oxidative phosphorylation. The respiratory chain contains 3 multisubunit complexes succinate dehydrogenase (complex II, CII), ubiquinol-cytochrome c oxidoreductase (cytochrome b-c1 complex, complex III, CIII) and cytochrome c oxidase (complex IV, CIV), that cooperate to transfer electrons derived from NADH and succinate to molecular oxygen, creating an electrochemical gradient over the inner membrane that drives transmembrane transport and the ATP synthase. Cytochrome c oxidase is the component of the respiratory chain that catalyzes the reduction of oxygen to water. Electrons originating from reduced cytochrome c in the intermembrane space (IMS) are transferred via the dinuclear copper A center (CU(A)) of subunit 2 and heme A of subunit 1 to the active site in subunit 1, a binuclear center (BNC) formed by heme A3 and copper B (CU(B)). The BNC reduces molecular oxygen to 2 water molecules using 4 electrons from cytochrome c in the IMS and 4 protons from the mitochondrial matrix.</text>
</comment>
<comment type="catalytic activity">
    <reaction evidence="2">
        <text>4 Fe(II)-[cytochrome c] + O2 + 8 H(+)(in) = 4 Fe(III)-[cytochrome c] + 2 H2O + 4 H(+)(out)</text>
        <dbReference type="Rhea" id="RHEA:11436"/>
        <dbReference type="Rhea" id="RHEA-COMP:10350"/>
        <dbReference type="Rhea" id="RHEA-COMP:14399"/>
        <dbReference type="ChEBI" id="CHEBI:15377"/>
        <dbReference type="ChEBI" id="CHEBI:15378"/>
        <dbReference type="ChEBI" id="CHEBI:15379"/>
        <dbReference type="ChEBI" id="CHEBI:29033"/>
        <dbReference type="ChEBI" id="CHEBI:29034"/>
        <dbReference type="EC" id="7.1.1.9"/>
    </reaction>
    <physiologicalReaction direction="left-to-right" evidence="2">
        <dbReference type="Rhea" id="RHEA:11437"/>
    </physiologicalReaction>
</comment>
<comment type="subunit">
    <text evidence="1 3">Component of the cytochrome c oxidase (complex IV, CIV), a multisubunit enzyme composed of 14 subunits. The complex is composed of a catalytic core of 3 subunits MT-CO1, MT-CO2 and MT-CO3, encoded in the mitochondrial DNA, and 11 supernumerary subunits COX4I, COX5A, COX5B, COX6A, COX6B, COX6C, COX7A, COX7B, COX7C, COX8 and NDUFA4, which are encoded in the nuclear genome (By similarity). The complex exists as a monomer or a dimer and forms supercomplexes (SCs) in the inner mitochondrial membrane with NADH-ubiquinone oxidoreductase (complex I, CI) and ubiquinol-cytochrome c oxidoreductase (cytochrome b-c1 complex, complex III, CIII), resulting in different assemblies (supercomplex SCI(1)III(2)IV(1) and megacomplex MCI(2)III(2)IV(2)) (PubMed:27654913).</text>
</comment>
<comment type="subcellular location">
    <subcellularLocation>
        <location evidence="3">Mitochondrion inner membrane</location>
        <topology evidence="3">Multi-pass membrane protein</topology>
    </subcellularLocation>
</comment>
<comment type="similarity">
    <text evidence="4">Belongs to the cytochrome c oxidase subunit 3 family.</text>
</comment>
<reference key="1">
    <citation type="journal article" date="1998" name="J. Mol. Evol.">
        <title>The complete mitochondrial DNA sequence of the domestic sheep (Ovis aries) and comparison with the other major ovine haplotype.</title>
        <authorList>
            <person name="Hiendleder S."/>
            <person name="Lewalski H."/>
            <person name="Wassmuth R."/>
            <person name="Janke A."/>
        </authorList>
    </citation>
    <scope>NUCLEOTIDE SEQUENCE [LARGE SCALE GENOMIC DNA]</scope>
    <source>
        <strain evidence="5">Merinolandschaf</strain>
        <tissue>Liver</tissue>
    </source>
</reference>
<reference key="2">
    <citation type="journal article" date="2016" name="Nature">
        <title>The architecture of respiratory supercomplexes.</title>
        <authorList>
            <person name="Letts J.A."/>
            <person name="Fiedorczuk K."/>
            <person name="Sazanov L.A."/>
        </authorList>
    </citation>
    <scope>STRUCTURE BY ELECTRON MICROSCOPY (5.80 ANGSTROMS) OF 3-261</scope>
</reference>
<sequence>MTHQTHAYHMVNPSPWPLTGALSALLMTSGLIMWFHFNSTALLTLGLTTNMLTMYQWWRDVIRESTFQGHHTPAVQKGLRYGMILFIISEVLFFTGFFWAFYHSSLAPTPELGGCWPPTGIHPLNPLEVPLLNTSVLLASGVSITWAHHSLMEGNRYHMLQALFITIALGVYFTLLQASEYYEAPFTISDGVYGSTFFVATGFHGLHVIIGSTFLIVCFFRQLKFHFTSSHHFGFEAAAWYWHFVDVVWLFLYMSIYWWGS</sequence>
<gene>
    <name type="primary">MT-CO3</name>
    <name type="synonym">COIII</name>
    <name type="synonym">COXIII</name>
    <name type="synonym">MTCO3</name>
</gene>
<evidence type="ECO:0000250" key="1">
    <source>
        <dbReference type="UniProtKB" id="P00415"/>
    </source>
</evidence>
<evidence type="ECO:0000250" key="2">
    <source>
        <dbReference type="UniProtKB" id="P00420"/>
    </source>
</evidence>
<evidence type="ECO:0000269" key="3">
    <source>
    </source>
</evidence>
<evidence type="ECO:0000305" key="4"/>
<evidence type="ECO:0000312" key="5">
    <source>
        <dbReference type="Proteomes" id="UP000002356"/>
    </source>
</evidence>
<dbReference type="EC" id="7.1.1.9"/>
<dbReference type="EMBL" id="AF010406">
    <property type="protein sequence ID" value="AAD10108.1"/>
    <property type="molecule type" value="Genomic_DNA"/>
</dbReference>
<dbReference type="EMBL" id="U85910">
    <property type="protein sequence ID" value="AAB71760.1"/>
    <property type="status" value="ALT_SEQ"/>
    <property type="molecule type" value="Genomic_DNA"/>
</dbReference>
<dbReference type="PIR" id="T11056">
    <property type="entry name" value="T11056"/>
</dbReference>
<dbReference type="RefSeq" id="NP_008412.1">
    <property type="nucleotide sequence ID" value="NC_001941.1"/>
</dbReference>
<dbReference type="PDB" id="5J4Z">
    <property type="method" value="EM"/>
    <property type="resolution" value="5.80 A"/>
    <property type="chains" value="BC=3-261"/>
</dbReference>
<dbReference type="PDB" id="5J7Y">
    <property type="method" value="EM"/>
    <property type="resolution" value="6.70 A"/>
    <property type="chains" value="BC=3-261"/>
</dbReference>
<dbReference type="PDBsum" id="5J4Z"/>
<dbReference type="PDBsum" id="5J7Y"/>
<dbReference type="EMDB" id="EMD-8128"/>
<dbReference type="SMR" id="O21619"/>
<dbReference type="STRING" id="9940.ENSOARP00000000007"/>
<dbReference type="PaxDb" id="9940-ENSOARP00000000007"/>
<dbReference type="Ensembl" id="ENSOART00025000024">
    <property type="protein sequence ID" value="ENSOARP00025000008"/>
    <property type="gene ID" value="ENSOARG00025000024"/>
</dbReference>
<dbReference type="Ensembl" id="ENSOART00040000024">
    <property type="protein sequence ID" value="ENSOARP00040000008"/>
    <property type="gene ID" value="ENSOARG00040000024"/>
</dbReference>
<dbReference type="Ensembl" id="ENSOART00180000024">
    <property type="protein sequence ID" value="ENSOARP00180000008"/>
    <property type="gene ID" value="ENSOARG00180000024"/>
</dbReference>
<dbReference type="Ensembl" id="ENSOART00185000024">
    <property type="protein sequence ID" value="ENSOARP00185000008"/>
    <property type="gene ID" value="ENSOARG00185000024"/>
</dbReference>
<dbReference type="Ensembl" id="ENSOART00215000024">
    <property type="protein sequence ID" value="ENSOARP00215000008"/>
    <property type="gene ID" value="ENSOARG00215000024"/>
</dbReference>
<dbReference type="Ensembl" id="ENSOART00220000024">
    <property type="protein sequence ID" value="ENSOARP00220000008"/>
    <property type="gene ID" value="ENSOARG00220000024"/>
</dbReference>
<dbReference type="Ensembl" id="ENSOART00225000024">
    <property type="protein sequence ID" value="ENSOARP00225000008"/>
    <property type="gene ID" value="ENSOARG00225000024"/>
</dbReference>
<dbReference type="Ensembl" id="ENSOART00260000024">
    <property type="protein sequence ID" value="ENSOARP00260000008"/>
    <property type="gene ID" value="ENSOARG00260000024"/>
</dbReference>
<dbReference type="GeneID" id="808261"/>
<dbReference type="KEGG" id="oas:808261"/>
<dbReference type="CTD" id="4514"/>
<dbReference type="eggNOG" id="KOG4664">
    <property type="taxonomic scope" value="Eukaryota"/>
</dbReference>
<dbReference type="HOGENOM" id="CLU_044071_0_0_1"/>
<dbReference type="OMA" id="SIYWWGS"/>
<dbReference type="OrthoDB" id="10050457at2759"/>
<dbReference type="Proteomes" id="UP000002356">
    <property type="component" value="Mitochondrion"/>
</dbReference>
<dbReference type="Bgee" id="ENSOARG00000000023">
    <property type="expression patterns" value="Expressed in adrenal cortex and 55 other cell types or tissues"/>
</dbReference>
<dbReference type="ExpressionAtlas" id="O21619">
    <property type="expression patterns" value="baseline and differential"/>
</dbReference>
<dbReference type="GO" id="GO:0005743">
    <property type="term" value="C:mitochondrial inner membrane"/>
    <property type="evidence" value="ECO:0007669"/>
    <property type="project" value="UniProtKB-SubCell"/>
</dbReference>
<dbReference type="GO" id="GO:0045277">
    <property type="term" value="C:respiratory chain complex IV"/>
    <property type="evidence" value="ECO:0000250"/>
    <property type="project" value="UniProtKB"/>
</dbReference>
<dbReference type="GO" id="GO:0004129">
    <property type="term" value="F:cytochrome-c oxidase activity"/>
    <property type="evidence" value="ECO:0007669"/>
    <property type="project" value="UniProtKB-EC"/>
</dbReference>
<dbReference type="GO" id="GO:0006123">
    <property type="term" value="P:mitochondrial electron transport, cytochrome c to oxygen"/>
    <property type="evidence" value="ECO:0007669"/>
    <property type="project" value="TreeGrafter"/>
</dbReference>
<dbReference type="GO" id="GO:0008535">
    <property type="term" value="P:respiratory chain complex IV assembly"/>
    <property type="evidence" value="ECO:0000250"/>
    <property type="project" value="UniProtKB"/>
</dbReference>
<dbReference type="CDD" id="cd01665">
    <property type="entry name" value="Cyt_c_Oxidase_III"/>
    <property type="match status" value="1"/>
</dbReference>
<dbReference type="FunFam" id="1.10.287.70:FF:000048">
    <property type="entry name" value="Cytochrome c oxidase subunit 3"/>
    <property type="match status" value="1"/>
</dbReference>
<dbReference type="FunFam" id="1.20.120.80:FF:000002">
    <property type="entry name" value="Cytochrome c oxidase subunit 3"/>
    <property type="match status" value="1"/>
</dbReference>
<dbReference type="Gene3D" id="1.10.287.70">
    <property type="match status" value="1"/>
</dbReference>
<dbReference type="Gene3D" id="1.20.120.80">
    <property type="entry name" value="Cytochrome c oxidase, subunit III, four-helix bundle"/>
    <property type="match status" value="1"/>
</dbReference>
<dbReference type="InterPro" id="IPR024791">
    <property type="entry name" value="Cyt_c/ubiquinol_Oxase_su3"/>
</dbReference>
<dbReference type="InterPro" id="IPR033945">
    <property type="entry name" value="Cyt_c_oxase_su3_dom"/>
</dbReference>
<dbReference type="InterPro" id="IPR000298">
    <property type="entry name" value="Cyt_c_oxidase-like_su3"/>
</dbReference>
<dbReference type="InterPro" id="IPR035973">
    <property type="entry name" value="Cyt_c_oxidase_su3-like_sf"/>
</dbReference>
<dbReference type="InterPro" id="IPR013833">
    <property type="entry name" value="Cyt_c_oxidase_su3_a-hlx"/>
</dbReference>
<dbReference type="PANTHER" id="PTHR11403:SF7">
    <property type="entry name" value="CYTOCHROME C OXIDASE SUBUNIT 3"/>
    <property type="match status" value="1"/>
</dbReference>
<dbReference type="PANTHER" id="PTHR11403">
    <property type="entry name" value="CYTOCHROME C OXIDASE SUBUNIT III"/>
    <property type="match status" value="1"/>
</dbReference>
<dbReference type="Pfam" id="PF00510">
    <property type="entry name" value="COX3"/>
    <property type="match status" value="1"/>
</dbReference>
<dbReference type="SUPFAM" id="SSF81452">
    <property type="entry name" value="Cytochrome c oxidase subunit III-like"/>
    <property type="match status" value="1"/>
</dbReference>
<dbReference type="PROSITE" id="PS50253">
    <property type="entry name" value="COX3"/>
    <property type="match status" value="1"/>
</dbReference>
<organism>
    <name type="scientific">Ovis aries</name>
    <name type="common">Sheep</name>
    <dbReference type="NCBI Taxonomy" id="9940"/>
    <lineage>
        <taxon>Eukaryota</taxon>
        <taxon>Metazoa</taxon>
        <taxon>Chordata</taxon>
        <taxon>Craniata</taxon>
        <taxon>Vertebrata</taxon>
        <taxon>Euteleostomi</taxon>
        <taxon>Mammalia</taxon>
        <taxon>Eutheria</taxon>
        <taxon>Laurasiatheria</taxon>
        <taxon>Artiodactyla</taxon>
        <taxon>Ruminantia</taxon>
        <taxon>Pecora</taxon>
        <taxon>Bovidae</taxon>
        <taxon>Caprinae</taxon>
        <taxon>Ovis</taxon>
    </lineage>
</organism>
<protein>
    <recommendedName>
        <fullName>Cytochrome c oxidase subunit 3</fullName>
        <ecNumber>7.1.1.9</ecNumber>
    </recommendedName>
    <alternativeName>
        <fullName>Cytochrome c oxidase polypeptide III</fullName>
    </alternativeName>
</protein>
<geneLocation type="mitochondrion"/>
<proteinExistence type="evidence at protein level"/>
<feature type="chain" id="PRO_0000183853" description="Cytochrome c oxidase subunit 3">
    <location>
        <begin position="1"/>
        <end position="261"/>
    </location>
</feature>
<feature type="topological domain" description="Mitochondrial matrix" evidence="3">
    <location>
        <begin position="1"/>
        <end position="15"/>
    </location>
</feature>
<feature type="transmembrane region" description="Helical; Name=I" evidence="1">
    <location>
        <begin position="16"/>
        <end position="34"/>
    </location>
</feature>
<feature type="topological domain" description="Mitochondrial intermembrane" evidence="3">
    <location>
        <begin position="35"/>
        <end position="40"/>
    </location>
</feature>
<feature type="transmembrane region" description="Helical; Name=II" evidence="1">
    <location>
        <begin position="41"/>
        <end position="66"/>
    </location>
</feature>
<feature type="topological domain" description="Mitochondrial matrix" evidence="3">
    <location>
        <begin position="67"/>
        <end position="72"/>
    </location>
</feature>
<feature type="transmembrane region" description="Helical; Name=III" evidence="1">
    <location>
        <begin position="73"/>
        <end position="105"/>
    </location>
</feature>
<feature type="topological domain" description="Mitochondrial intermembrane" evidence="3">
    <location>
        <begin position="106"/>
        <end position="128"/>
    </location>
</feature>
<feature type="transmembrane region" description="Helical; Name=IV" evidence="1">
    <location>
        <begin position="129"/>
        <end position="152"/>
    </location>
</feature>
<feature type="topological domain" description="Mitochondrial matrix" evidence="3">
    <location>
        <begin position="153"/>
        <end position="155"/>
    </location>
</feature>
<feature type="transmembrane region" description="Helical; Name=V" evidence="1">
    <location>
        <begin position="156"/>
        <end position="183"/>
    </location>
</feature>
<feature type="topological domain" description="Mitochondrial intermembrane" evidence="3">
    <location>
        <begin position="184"/>
        <end position="190"/>
    </location>
</feature>
<feature type="transmembrane region" description="Helical; Name=VI" evidence="1">
    <location>
        <begin position="191"/>
        <end position="223"/>
    </location>
</feature>
<feature type="topological domain" description="Mitochondrial matrix" evidence="3">
    <location>
        <begin position="224"/>
        <end position="232"/>
    </location>
</feature>
<feature type="transmembrane region" description="Helical; Name=VII" evidence="1">
    <location>
        <begin position="233"/>
        <end position="256"/>
    </location>
</feature>
<feature type="topological domain" description="Mitochondrial intermembrane" evidence="3">
    <location>
        <begin position="257"/>
        <end position="261"/>
    </location>
</feature>
<accession>O21619</accession>
<keyword id="KW-0002">3D-structure</keyword>
<keyword id="KW-0472">Membrane</keyword>
<keyword id="KW-0496">Mitochondrion</keyword>
<keyword id="KW-0999">Mitochondrion inner membrane</keyword>
<keyword id="KW-1185">Reference proteome</keyword>
<keyword id="KW-1278">Translocase</keyword>
<keyword id="KW-0812">Transmembrane</keyword>
<keyword id="KW-1133">Transmembrane helix</keyword>